<name>RSMA_SALTY</name>
<keyword id="KW-0963">Cytoplasm</keyword>
<keyword id="KW-0489">Methyltransferase</keyword>
<keyword id="KW-1185">Reference proteome</keyword>
<keyword id="KW-0694">RNA-binding</keyword>
<keyword id="KW-0698">rRNA processing</keyword>
<keyword id="KW-0949">S-adenosyl-L-methionine</keyword>
<keyword id="KW-0808">Transferase</keyword>
<gene>
    <name evidence="1" type="primary">rsmA</name>
    <name evidence="1" type="synonym">ksgA</name>
    <name type="ordered locus">STM0090</name>
</gene>
<feature type="chain" id="PRO_0000101599" description="Ribosomal RNA small subunit methyltransferase A">
    <location>
        <begin position="1"/>
        <end position="273"/>
    </location>
</feature>
<feature type="binding site" evidence="1">
    <location>
        <position position="18"/>
    </location>
    <ligand>
        <name>S-adenosyl-L-methionine</name>
        <dbReference type="ChEBI" id="CHEBI:59789"/>
    </ligand>
</feature>
<feature type="binding site" evidence="1">
    <location>
        <position position="20"/>
    </location>
    <ligand>
        <name>S-adenosyl-L-methionine</name>
        <dbReference type="ChEBI" id="CHEBI:59789"/>
    </ligand>
</feature>
<feature type="binding site" evidence="1">
    <location>
        <position position="45"/>
    </location>
    <ligand>
        <name>S-adenosyl-L-methionine</name>
        <dbReference type="ChEBI" id="CHEBI:59789"/>
    </ligand>
</feature>
<feature type="binding site" evidence="1">
    <location>
        <position position="66"/>
    </location>
    <ligand>
        <name>S-adenosyl-L-methionine</name>
        <dbReference type="ChEBI" id="CHEBI:59789"/>
    </ligand>
</feature>
<feature type="binding site" evidence="1">
    <location>
        <position position="91"/>
    </location>
    <ligand>
        <name>S-adenosyl-L-methionine</name>
        <dbReference type="ChEBI" id="CHEBI:59789"/>
    </ligand>
</feature>
<feature type="binding site" evidence="1">
    <location>
        <position position="113"/>
    </location>
    <ligand>
        <name>S-adenosyl-L-methionine</name>
        <dbReference type="ChEBI" id="CHEBI:59789"/>
    </ligand>
</feature>
<feature type="sequence conflict" description="In Ref. 2; AAA79338." evidence="2" ref="2">
    <original>C</original>
    <variation>S</variation>
    <location>
        <position position="258"/>
    </location>
</feature>
<protein>
    <recommendedName>
        <fullName evidence="1">Ribosomal RNA small subunit methyltransferase A</fullName>
        <ecNumber evidence="1">2.1.1.182</ecNumber>
    </recommendedName>
    <alternativeName>
        <fullName evidence="1">16S rRNA (adenine(1518)-N(6)/adenine(1519)-N(6))-dimethyltransferase</fullName>
    </alternativeName>
    <alternativeName>
        <fullName evidence="1">16S rRNA dimethyladenosine transferase</fullName>
    </alternativeName>
    <alternativeName>
        <fullName evidence="1">16S rRNA dimethylase</fullName>
    </alternativeName>
    <alternativeName>
        <fullName evidence="1">S-adenosylmethionine-6-N', N'-adenosyl(rRNA) dimethyltransferase</fullName>
    </alternativeName>
</protein>
<accession>Q56016</accession>
<proteinExistence type="inferred from homology"/>
<sequence>MNNRVHQGHLARKRFGQNFLNDRFVIDSIVSAINPQKGQAMVEIGPGLAALTEPVGERLDKLTVIELDRDLAARLQTHPFLGPKLTIYQQDAMTMNFGELSAQLGQPLRVFGNLPYNISTPLMFHLFSYTDAIADMHFMLQKEVVNRLVAGPNSKEYGRLSVMAQYYCQVIPVLEVPPSAFTPPPKVDSAVVRLVPHATMPYPVKDIRVLSRITTEAFNQRRKTIRNSLGNLFSVETLTEMGIDPAMRAENISVAQYCQMANYLSENAPLKES</sequence>
<comment type="function">
    <text evidence="1">Specifically dimethylates two adjacent adenosines (A1518 and A1519) in the loop of a conserved hairpin near the 3'-end of 16S rRNA in the 30S particle. May play a critical role in biogenesis of 30S subunits.</text>
</comment>
<comment type="catalytic activity">
    <reaction evidence="1">
        <text>adenosine(1518)/adenosine(1519) in 16S rRNA + 4 S-adenosyl-L-methionine = N(6)-dimethyladenosine(1518)/N(6)-dimethyladenosine(1519) in 16S rRNA + 4 S-adenosyl-L-homocysteine + 4 H(+)</text>
        <dbReference type="Rhea" id="RHEA:19609"/>
        <dbReference type="Rhea" id="RHEA-COMP:10232"/>
        <dbReference type="Rhea" id="RHEA-COMP:10233"/>
        <dbReference type="ChEBI" id="CHEBI:15378"/>
        <dbReference type="ChEBI" id="CHEBI:57856"/>
        <dbReference type="ChEBI" id="CHEBI:59789"/>
        <dbReference type="ChEBI" id="CHEBI:74411"/>
        <dbReference type="ChEBI" id="CHEBI:74493"/>
        <dbReference type="EC" id="2.1.1.182"/>
    </reaction>
</comment>
<comment type="subcellular location">
    <subcellularLocation>
        <location evidence="1">Cytoplasm</location>
    </subcellularLocation>
</comment>
<comment type="similarity">
    <text evidence="1">Belongs to the class I-like SAM-binding methyltransferase superfamily. rRNA adenine N(6)-methyltransferase family. RsmA subfamily.</text>
</comment>
<reference key="1">
    <citation type="journal article" date="2001" name="Nature">
        <title>Complete genome sequence of Salmonella enterica serovar Typhimurium LT2.</title>
        <authorList>
            <person name="McClelland M."/>
            <person name="Sanderson K.E."/>
            <person name="Spieth J."/>
            <person name="Clifton S.W."/>
            <person name="Latreille P."/>
            <person name="Courtney L."/>
            <person name="Porwollik S."/>
            <person name="Ali J."/>
            <person name="Dante M."/>
            <person name="Du F."/>
            <person name="Hou S."/>
            <person name="Layman D."/>
            <person name="Leonard S."/>
            <person name="Nguyen C."/>
            <person name="Scott K."/>
            <person name="Holmes A."/>
            <person name="Grewal N."/>
            <person name="Mulvaney E."/>
            <person name="Ryan E."/>
            <person name="Sun H."/>
            <person name="Florea L."/>
            <person name="Miller W."/>
            <person name="Stoneking T."/>
            <person name="Nhan M."/>
            <person name="Waterston R."/>
            <person name="Wilson R.K."/>
        </authorList>
    </citation>
    <scope>NUCLEOTIDE SEQUENCE [LARGE SCALE GENOMIC DNA]</scope>
    <source>
        <strain>LT2 / SGSC1412 / ATCC 700720</strain>
    </source>
</reference>
<reference key="2">
    <citation type="submission" date="1995-10" db="EMBL/GenBank/DDBJ databases">
        <authorList>
            <person name="Smith R.L."/>
            <person name="Ahuja D."/>
            <person name="Maguire M.E."/>
        </authorList>
    </citation>
    <scope>NUCLEOTIDE SEQUENCE [GENOMIC DNA] OF 233-273</scope>
    <source>
        <strain>LT2</strain>
    </source>
</reference>
<evidence type="ECO:0000255" key="1">
    <source>
        <dbReference type="HAMAP-Rule" id="MF_00607"/>
    </source>
</evidence>
<evidence type="ECO:0000305" key="2"/>
<organism>
    <name type="scientific">Salmonella typhimurium (strain LT2 / SGSC1412 / ATCC 700720)</name>
    <dbReference type="NCBI Taxonomy" id="99287"/>
    <lineage>
        <taxon>Bacteria</taxon>
        <taxon>Pseudomonadati</taxon>
        <taxon>Pseudomonadota</taxon>
        <taxon>Gammaproteobacteria</taxon>
        <taxon>Enterobacterales</taxon>
        <taxon>Enterobacteriaceae</taxon>
        <taxon>Salmonella</taxon>
    </lineage>
</organism>
<dbReference type="EC" id="2.1.1.182" evidence="1"/>
<dbReference type="EMBL" id="AE006468">
    <property type="protein sequence ID" value="AAL19054.1"/>
    <property type="molecule type" value="Genomic_DNA"/>
</dbReference>
<dbReference type="EMBL" id="U24176">
    <property type="protein sequence ID" value="AAA79338.1"/>
    <property type="molecule type" value="Genomic_DNA"/>
</dbReference>
<dbReference type="RefSeq" id="NP_459095.1">
    <property type="nucleotide sequence ID" value="NC_003197.2"/>
</dbReference>
<dbReference type="RefSeq" id="WP_001065401.1">
    <property type="nucleotide sequence ID" value="NC_003197.2"/>
</dbReference>
<dbReference type="SMR" id="Q56016"/>
<dbReference type="STRING" id="99287.STM0090"/>
<dbReference type="PaxDb" id="99287-STM0090"/>
<dbReference type="GeneID" id="1251608"/>
<dbReference type="KEGG" id="stm:STM0090"/>
<dbReference type="PATRIC" id="fig|99287.12.peg.93"/>
<dbReference type="HOGENOM" id="CLU_041220_0_1_6"/>
<dbReference type="PhylomeDB" id="Q56016"/>
<dbReference type="BioCyc" id="SENT99287:STM0090-MONOMER"/>
<dbReference type="Proteomes" id="UP000001014">
    <property type="component" value="Chromosome"/>
</dbReference>
<dbReference type="GO" id="GO:0005829">
    <property type="term" value="C:cytosol"/>
    <property type="evidence" value="ECO:0000318"/>
    <property type="project" value="GO_Central"/>
</dbReference>
<dbReference type="GO" id="GO:0052908">
    <property type="term" value="F:16S rRNA (adenine(1518)-N(6)/adenine(1519)-N(6))-dimethyltransferase activity"/>
    <property type="evidence" value="ECO:0007669"/>
    <property type="project" value="UniProtKB-EC"/>
</dbReference>
<dbReference type="GO" id="GO:0003723">
    <property type="term" value="F:RNA binding"/>
    <property type="evidence" value="ECO:0007669"/>
    <property type="project" value="UniProtKB-KW"/>
</dbReference>
<dbReference type="GO" id="GO:0000179">
    <property type="term" value="F:rRNA (adenine-N6,N6-)-dimethyltransferase activity"/>
    <property type="evidence" value="ECO:0000318"/>
    <property type="project" value="GO_Central"/>
</dbReference>
<dbReference type="GO" id="GO:0031167">
    <property type="term" value="P:rRNA methylation"/>
    <property type="evidence" value="ECO:0000318"/>
    <property type="project" value="GO_Central"/>
</dbReference>
<dbReference type="FunFam" id="1.10.8.100:FF:000001">
    <property type="entry name" value="Ribosomal RNA small subunit methyltransferase A"/>
    <property type="match status" value="1"/>
</dbReference>
<dbReference type="FunFam" id="3.40.50.150:FF:000006">
    <property type="entry name" value="Ribosomal RNA small subunit methyltransferase A"/>
    <property type="match status" value="1"/>
</dbReference>
<dbReference type="Gene3D" id="1.10.8.100">
    <property type="entry name" value="Ribosomal RNA adenine dimethylase-like, domain 2"/>
    <property type="match status" value="1"/>
</dbReference>
<dbReference type="Gene3D" id="3.40.50.150">
    <property type="entry name" value="Vaccinia Virus protein VP39"/>
    <property type="match status" value="1"/>
</dbReference>
<dbReference type="HAMAP" id="MF_00607">
    <property type="entry name" value="16SrRNA_methyltr_A"/>
    <property type="match status" value="1"/>
</dbReference>
<dbReference type="InterPro" id="IPR001737">
    <property type="entry name" value="KsgA/Erm"/>
</dbReference>
<dbReference type="InterPro" id="IPR023165">
    <property type="entry name" value="rRNA_Ade_diMease-like_C"/>
</dbReference>
<dbReference type="InterPro" id="IPR020596">
    <property type="entry name" value="rRNA_Ade_Mease_Trfase_CS"/>
</dbReference>
<dbReference type="InterPro" id="IPR020598">
    <property type="entry name" value="rRNA_Ade_methylase_Trfase_N"/>
</dbReference>
<dbReference type="InterPro" id="IPR011530">
    <property type="entry name" value="rRNA_adenine_dimethylase"/>
</dbReference>
<dbReference type="InterPro" id="IPR029063">
    <property type="entry name" value="SAM-dependent_MTases_sf"/>
</dbReference>
<dbReference type="NCBIfam" id="TIGR00755">
    <property type="entry name" value="ksgA"/>
    <property type="match status" value="1"/>
</dbReference>
<dbReference type="PANTHER" id="PTHR11727">
    <property type="entry name" value="DIMETHYLADENOSINE TRANSFERASE"/>
    <property type="match status" value="1"/>
</dbReference>
<dbReference type="PANTHER" id="PTHR11727:SF7">
    <property type="entry name" value="DIMETHYLADENOSINE TRANSFERASE-RELATED"/>
    <property type="match status" value="1"/>
</dbReference>
<dbReference type="Pfam" id="PF00398">
    <property type="entry name" value="RrnaAD"/>
    <property type="match status" value="1"/>
</dbReference>
<dbReference type="SMART" id="SM00650">
    <property type="entry name" value="rADc"/>
    <property type="match status" value="1"/>
</dbReference>
<dbReference type="SUPFAM" id="SSF53335">
    <property type="entry name" value="S-adenosyl-L-methionine-dependent methyltransferases"/>
    <property type="match status" value="1"/>
</dbReference>
<dbReference type="PROSITE" id="PS01131">
    <property type="entry name" value="RRNA_A_DIMETH"/>
    <property type="match status" value="1"/>
</dbReference>
<dbReference type="PROSITE" id="PS51689">
    <property type="entry name" value="SAM_RNA_A_N6_MT"/>
    <property type="match status" value="1"/>
</dbReference>